<proteinExistence type="inferred from homology"/>
<gene>
    <name evidence="3" type="primary">RTCB</name>
</gene>
<keyword id="KW-0963">Cytoplasm</keyword>
<keyword id="KW-0342">GTP-binding</keyword>
<keyword id="KW-1017">Isopeptide bond</keyword>
<keyword id="KW-0436">Ligase</keyword>
<keyword id="KW-0464">Manganese</keyword>
<keyword id="KW-0479">Metal-binding</keyword>
<keyword id="KW-0547">Nucleotide-binding</keyword>
<keyword id="KW-0539">Nucleus</keyword>
<keyword id="KW-0597">Phosphoprotein</keyword>
<keyword id="KW-1185">Reference proteome</keyword>
<keyword id="KW-0819">tRNA processing</keyword>
<keyword id="KW-0832">Ubl conjugation</keyword>
<name>RTCB_PAPAN</name>
<feature type="chain" id="PRO_0000328510" description="RNA-splicing ligase RtcB homolog">
    <location>
        <begin position="1"/>
        <end position="505"/>
    </location>
</feature>
<feature type="active site" description="GMP-histidine intermediate" evidence="3">
    <location>
        <position position="428"/>
    </location>
</feature>
<feature type="binding site" evidence="3">
    <location>
        <position position="119"/>
    </location>
    <ligand>
        <name>Mn(2+)</name>
        <dbReference type="ChEBI" id="CHEBI:29035"/>
        <label>1</label>
    </ligand>
</feature>
<feature type="binding site" evidence="3">
    <location>
        <position position="122"/>
    </location>
    <ligand>
        <name>Mn(2+)</name>
        <dbReference type="ChEBI" id="CHEBI:29035"/>
        <label>1</label>
    </ligand>
</feature>
<feature type="binding site" evidence="3">
    <location>
        <position position="122"/>
    </location>
    <ligand>
        <name>Mn(2+)</name>
        <dbReference type="ChEBI" id="CHEBI:29035"/>
        <label>2</label>
    </ligand>
</feature>
<feature type="binding site" evidence="3">
    <location>
        <begin position="226"/>
        <end position="230"/>
    </location>
    <ligand>
        <name>GMP</name>
        <dbReference type="ChEBI" id="CHEBI:58115"/>
    </ligand>
</feature>
<feature type="binding site" evidence="3">
    <location>
        <position position="227"/>
    </location>
    <ligand>
        <name>Mn(2+)</name>
        <dbReference type="ChEBI" id="CHEBI:29035"/>
        <label>1</label>
    </ligand>
</feature>
<feature type="binding site" evidence="3">
    <location>
        <position position="259"/>
    </location>
    <ligand>
        <name>Mn(2+)</name>
        <dbReference type="ChEBI" id="CHEBI:29035"/>
        <label>2</label>
    </ligand>
</feature>
<feature type="binding site" evidence="3">
    <location>
        <begin position="353"/>
        <end position="354"/>
    </location>
    <ligand>
        <name>GMP</name>
        <dbReference type="ChEBI" id="CHEBI:58115"/>
    </ligand>
</feature>
<feature type="binding site" evidence="3">
    <location>
        <position position="353"/>
    </location>
    <ligand>
        <name>Mn(2+)</name>
        <dbReference type="ChEBI" id="CHEBI:29035"/>
        <label>2</label>
    </ligand>
</feature>
<feature type="binding site" evidence="3">
    <location>
        <begin position="402"/>
        <end position="405"/>
    </location>
    <ligand>
        <name>GMP</name>
        <dbReference type="ChEBI" id="CHEBI:58115"/>
    </ligand>
</feature>
<feature type="binding site" evidence="3">
    <location>
        <position position="409"/>
    </location>
    <ligand>
        <name>GMP</name>
        <dbReference type="ChEBI" id="CHEBI:58115"/>
    </ligand>
</feature>
<feature type="binding site" evidence="3">
    <location>
        <begin position="428"/>
        <end position="431"/>
    </location>
    <ligand>
        <name>GMP</name>
        <dbReference type="ChEBI" id="CHEBI:58115"/>
    </ligand>
</feature>
<feature type="binding site" evidence="3">
    <location>
        <position position="504"/>
    </location>
    <ligand>
        <name>GMP</name>
        <dbReference type="ChEBI" id="CHEBI:58115"/>
    </ligand>
</feature>
<feature type="modified residue" description="Phosphoserine" evidence="2">
    <location>
        <position position="300"/>
    </location>
</feature>
<feature type="cross-link" description="Glycyl lysine isopeptide (Lys-Gly) (interchain with G-Cter in SUMO2)" evidence="2">
    <location>
        <position position="496"/>
    </location>
</feature>
<dbReference type="EC" id="6.5.1.8" evidence="3"/>
<dbReference type="EMBL" id="DP000487">
    <property type="protein sequence ID" value="ABW96826.1"/>
    <property type="molecule type" value="Genomic_DNA"/>
</dbReference>
<dbReference type="RefSeq" id="NP_001162246.1">
    <property type="nucleotide sequence ID" value="NM_001168775.1"/>
</dbReference>
<dbReference type="SMR" id="A9CB42"/>
<dbReference type="STRING" id="9555.ENSPANP00000013203"/>
<dbReference type="Ensembl" id="ENSPANT00000008987.3">
    <property type="protein sequence ID" value="ENSPANP00000013203.1"/>
    <property type="gene ID" value="ENSPANG00000016035.3"/>
</dbReference>
<dbReference type="GeneID" id="100137237"/>
<dbReference type="KEGG" id="panu:100137237"/>
<dbReference type="CTD" id="51493"/>
<dbReference type="eggNOG" id="KOG3833">
    <property type="taxonomic scope" value="Eukaryota"/>
</dbReference>
<dbReference type="GeneTree" id="ENSGT00940000155911"/>
<dbReference type="HOGENOM" id="CLU_022279_0_0_1"/>
<dbReference type="OMA" id="QTRGVEC"/>
<dbReference type="OrthoDB" id="1134at314294"/>
<dbReference type="Proteomes" id="UP000028761">
    <property type="component" value="Chromosome 16"/>
</dbReference>
<dbReference type="Bgee" id="ENSPANG00000016035">
    <property type="expression patterns" value="Expressed in cornea and 67 other cell types or tissues"/>
</dbReference>
<dbReference type="GO" id="GO:0005737">
    <property type="term" value="C:cytoplasm"/>
    <property type="evidence" value="ECO:0000250"/>
    <property type="project" value="UniProtKB"/>
</dbReference>
<dbReference type="GO" id="GO:0005829">
    <property type="term" value="C:cytosol"/>
    <property type="evidence" value="ECO:0007669"/>
    <property type="project" value="Ensembl"/>
</dbReference>
<dbReference type="GO" id="GO:0005654">
    <property type="term" value="C:nucleoplasm"/>
    <property type="evidence" value="ECO:0007669"/>
    <property type="project" value="Ensembl"/>
</dbReference>
<dbReference type="GO" id="GO:0005634">
    <property type="term" value="C:nucleus"/>
    <property type="evidence" value="ECO:0000250"/>
    <property type="project" value="UniProtKB"/>
</dbReference>
<dbReference type="GO" id="GO:0072669">
    <property type="term" value="C:tRNA-splicing ligase complex"/>
    <property type="evidence" value="ECO:0000250"/>
    <property type="project" value="UniProtKB"/>
</dbReference>
<dbReference type="GO" id="GO:0005525">
    <property type="term" value="F:GTP binding"/>
    <property type="evidence" value="ECO:0007669"/>
    <property type="project" value="UniProtKB-KW"/>
</dbReference>
<dbReference type="GO" id="GO:0046872">
    <property type="term" value="F:metal ion binding"/>
    <property type="evidence" value="ECO:0007669"/>
    <property type="project" value="UniProtKB-KW"/>
</dbReference>
<dbReference type="GO" id="GO:0003972">
    <property type="term" value="F:RNA ligase (ATP) activity"/>
    <property type="evidence" value="ECO:0007669"/>
    <property type="project" value="TreeGrafter"/>
</dbReference>
<dbReference type="GO" id="GO:0170057">
    <property type="term" value="F:RNA ligase (GTP) activity"/>
    <property type="evidence" value="ECO:0000250"/>
    <property type="project" value="UniProtKB"/>
</dbReference>
<dbReference type="GO" id="GO:0017166">
    <property type="term" value="F:vinculin binding"/>
    <property type="evidence" value="ECO:0007669"/>
    <property type="project" value="Ensembl"/>
</dbReference>
<dbReference type="GO" id="GO:0006388">
    <property type="term" value="P:tRNA splicing, via endonucleolytic cleavage and ligation"/>
    <property type="evidence" value="ECO:0000250"/>
    <property type="project" value="UniProtKB"/>
</dbReference>
<dbReference type="FunFam" id="3.90.1860.10:FF:000001">
    <property type="entry name" value="tRNA-splicing ligase RtcB homolog"/>
    <property type="match status" value="1"/>
</dbReference>
<dbReference type="Gene3D" id="3.90.1860.10">
    <property type="entry name" value="tRNA-splicing ligase RtcB"/>
    <property type="match status" value="1"/>
</dbReference>
<dbReference type="HAMAP" id="MF_03144">
    <property type="entry name" value="RtcB_euk"/>
    <property type="match status" value="1"/>
</dbReference>
<dbReference type="InterPro" id="IPR001233">
    <property type="entry name" value="RtcB"/>
</dbReference>
<dbReference type="InterPro" id="IPR036025">
    <property type="entry name" value="RtcB-like_sf"/>
</dbReference>
<dbReference type="InterPro" id="IPR027513">
    <property type="entry name" value="RtcB_euk"/>
</dbReference>
<dbReference type="PANTHER" id="PTHR11118">
    <property type="entry name" value="RNA-SPLICING LIGASE RTCB HOMOLOG"/>
    <property type="match status" value="1"/>
</dbReference>
<dbReference type="PANTHER" id="PTHR11118:SF1">
    <property type="entry name" value="RNA-SPLICING LIGASE RTCB HOMOLOG"/>
    <property type="match status" value="1"/>
</dbReference>
<dbReference type="Pfam" id="PF01139">
    <property type="entry name" value="RtcB"/>
    <property type="match status" value="1"/>
</dbReference>
<dbReference type="SUPFAM" id="SSF103365">
    <property type="entry name" value="Hypothetical protein PH1602"/>
    <property type="match status" value="1"/>
</dbReference>
<dbReference type="PROSITE" id="PS01288">
    <property type="entry name" value="UPF0027"/>
    <property type="match status" value="1"/>
</dbReference>
<sequence>MSRNYNDELQFLEKISKNCWRIKKGFVPNMQVEGVFYVNDALEKLMFEELRNACRGGGVGGFLPAMKQIGNVAALPGIVHRSIGLPDVHSGYGFAIGNMAAFDMNDSEAVVSPGGVGFDINCGVRLLRTNLDESDVQPVKEQLAQAMFDHIPVGVGSKGVIPMNAKDLEEALEMGVDWSLREGYAWAEDKEHCEEYGRMLQADPNKVSARAKKRGLPQLGTLGAGNHYAEIQVVDEIFNEYAAKKMGIDHKGQVCVMIHSGSRGLGHQVATDALVAMEKAMKRDKIIVNDRQLACARIASPEGQDYLKGMAAAGNYAWVNRSSMTFLTRQAFAKVFNTTPDDLDLHVIYDVSHNIAKVEQHVVDGKERTLLVHRKGSTRAFPPHHPLIAVDYQLTGQPVLIGGTMGTCSYVLTGTEQGMTETFGTTCHGAGRALSRAKSRRNLDFQDVLDKLADMGIAIRVASPKLVMEEAPESYKNVTDVVNTCHDAGISKKAIKLRPIAVIKG</sequence>
<organism>
    <name type="scientific">Papio anubis</name>
    <name type="common">Olive baboon</name>
    <dbReference type="NCBI Taxonomy" id="9555"/>
    <lineage>
        <taxon>Eukaryota</taxon>
        <taxon>Metazoa</taxon>
        <taxon>Chordata</taxon>
        <taxon>Craniata</taxon>
        <taxon>Vertebrata</taxon>
        <taxon>Euteleostomi</taxon>
        <taxon>Mammalia</taxon>
        <taxon>Eutheria</taxon>
        <taxon>Euarchontoglires</taxon>
        <taxon>Primates</taxon>
        <taxon>Haplorrhini</taxon>
        <taxon>Catarrhini</taxon>
        <taxon>Cercopithecidae</taxon>
        <taxon>Cercopithecinae</taxon>
        <taxon>Papio</taxon>
    </lineage>
</organism>
<evidence type="ECO:0000250" key="1"/>
<evidence type="ECO:0000250" key="2">
    <source>
        <dbReference type="UniProtKB" id="Q9Y3I0"/>
    </source>
</evidence>
<evidence type="ECO:0000255" key="3">
    <source>
        <dbReference type="HAMAP-Rule" id="MF_03144"/>
    </source>
</evidence>
<protein>
    <recommendedName>
        <fullName evidence="3">RNA-splicing ligase RtcB homolog</fullName>
        <ecNumber evidence="3">6.5.1.8</ecNumber>
    </recommendedName>
    <alternativeName>
        <fullName evidence="3">3'-phosphate/5'-hydroxy nucleic acid ligase</fullName>
    </alternativeName>
</protein>
<comment type="function">
    <text evidence="3">Catalytic subunit of the tRNA-splicing ligase complex that acts by directly joining spliced tRNA halves to mature-sized tRNAs by incorporating the precursor-derived splice junction phosphate into the mature tRNA as a canonical 3',5'-phosphodiester. May act as an RNA ligase with broad substrate specificity, and may function toward other RNAs.</text>
</comment>
<comment type="catalytic activity">
    <reaction evidence="3">
        <text>a 3'-end 3'-phospho-ribonucleotide-RNA + a 5'-end dephospho-ribonucleoside-RNA + GTP = a ribonucleotidyl-ribonucleotide-RNA + GMP + diphosphate</text>
        <dbReference type="Rhea" id="RHEA:68076"/>
        <dbReference type="Rhea" id="RHEA-COMP:10463"/>
        <dbReference type="Rhea" id="RHEA-COMP:13936"/>
        <dbReference type="Rhea" id="RHEA-COMP:17355"/>
        <dbReference type="ChEBI" id="CHEBI:33019"/>
        <dbReference type="ChEBI" id="CHEBI:37565"/>
        <dbReference type="ChEBI" id="CHEBI:58115"/>
        <dbReference type="ChEBI" id="CHEBI:83062"/>
        <dbReference type="ChEBI" id="CHEBI:138284"/>
        <dbReference type="ChEBI" id="CHEBI:173118"/>
        <dbReference type="EC" id="6.5.1.8"/>
    </reaction>
</comment>
<comment type="catalytic activity">
    <reaction evidence="3">
        <text>a 3'-end 2',3'-cyclophospho-ribonucleotide-RNA + a 5'-end dephospho-ribonucleoside-RNA + GTP + H2O = a ribonucleotidyl-ribonucleotide-RNA + GMP + diphosphate + H(+)</text>
        <dbReference type="Rhea" id="RHEA:68080"/>
        <dbReference type="Rhea" id="RHEA-COMP:10464"/>
        <dbReference type="Rhea" id="RHEA-COMP:13936"/>
        <dbReference type="Rhea" id="RHEA-COMP:17355"/>
        <dbReference type="ChEBI" id="CHEBI:15377"/>
        <dbReference type="ChEBI" id="CHEBI:15378"/>
        <dbReference type="ChEBI" id="CHEBI:33019"/>
        <dbReference type="ChEBI" id="CHEBI:37565"/>
        <dbReference type="ChEBI" id="CHEBI:58115"/>
        <dbReference type="ChEBI" id="CHEBI:83064"/>
        <dbReference type="ChEBI" id="CHEBI:138284"/>
        <dbReference type="ChEBI" id="CHEBI:173118"/>
        <dbReference type="EC" id="6.5.1.8"/>
    </reaction>
</comment>
<comment type="cofactor">
    <cofactor evidence="3">
        <name>Mn(2+)</name>
        <dbReference type="ChEBI" id="CHEBI:29035"/>
    </cofactor>
    <text evidence="3">Binds 2 manganese ions per subunit.</text>
</comment>
<comment type="subunit">
    <text evidence="3">Catalytic component of the tRNA-splicing ligase complex.</text>
</comment>
<comment type="subcellular location">
    <subcellularLocation>
        <location evidence="1">Nucleus</location>
    </subcellularLocation>
    <subcellularLocation>
        <location evidence="3">Cytoplasm</location>
    </subcellularLocation>
    <text evidence="1">Enters into the nucleus in case of active transcription while it accumulates in cytosol when transcription level is low.</text>
</comment>
<comment type="miscellaneous">
    <text evidence="3">Ligation probably proceeds through 3 nucleotidyl transfer steps, with 2',3'-cyclic phosphate termini being hydrolyzed to 3'-P termini in a step that precedes 3'-P activation with GMP. In the first nucleotidyl transfer step, RTCB reacts with GTP to form a covalent RTCB-histidine-GMP intermediate with release of PPi; in the second step, the GMP moiety is transferred to the RNA 3'-P; in the third step, the 5'-OH from the opposite RNA strand attacks the activated 3'-P to form a 3',5'-phosphodiester bond and release GMP.</text>
</comment>
<comment type="similarity">
    <text evidence="3">Belongs to the RtcB family.</text>
</comment>
<reference key="1">
    <citation type="submission" date="2007-11" db="EMBL/GenBank/DDBJ databases">
        <title>NISC comparative sequencing initiative.</title>
        <authorList>
            <person name="Antonellis A."/>
            <person name="Benjamin B."/>
            <person name="Blakesley R.W."/>
            <person name="Bouffard G.G."/>
            <person name="Brinkley C."/>
            <person name="Brooks S."/>
            <person name="Chu G."/>
            <person name="Chub I."/>
            <person name="Coleman H."/>
            <person name="Fuksenko T."/>
            <person name="Gestole M."/>
            <person name="Gregory M."/>
            <person name="Guan X."/>
            <person name="Gupta J."/>
            <person name="Gurson N."/>
            <person name="Han E."/>
            <person name="Han J."/>
            <person name="Hansen N."/>
            <person name="Hargrove A."/>
            <person name="Hines-Harris K."/>
            <person name="Ho S.-L."/>
            <person name="Hu P."/>
            <person name="Hunter G."/>
            <person name="Hurle B."/>
            <person name="Idol J.R."/>
            <person name="Johnson T."/>
            <person name="Knight E."/>
            <person name="Kwong P."/>
            <person name="Lee-Lin S.-Q."/>
            <person name="Legaspi R."/>
            <person name="Madden M."/>
            <person name="Maduro Q.L."/>
            <person name="Maduro V.B."/>
            <person name="Margulies E.H."/>
            <person name="Masiello C."/>
            <person name="Maskeri B."/>
            <person name="McDowell J."/>
            <person name="Merkulov G."/>
            <person name="Montemayor C."/>
            <person name="Mullikin J.C."/>
            <person name="Park M."/>
            <person name="Prasad A."/>
            <person name="Ramsahoye C."/>
            <person name="Reddix-Dugue N."/>
            <person name="Riebow N."/>
            <person name="Schandler K."/>
            <person name="Schueler M.G."/>
            <person name="Sison C."/>
            <person name="Smith L."/>
            <person name="Stantripop S."/>
            <person name="Thomas J.W."/>
            <person name="Thomas P.J."/>
            <person name="Tsipouri V."/>
            <person name="Young A."/>
            <person name="Green E.D."/>
        </authorList>
    </citation>
    <scope>NUCLEOTIDE SEQUENCE [LARGE SCALE GENOMIC DNA]</scope>
</reference>
<accession>A9CB42</accession>